<sequence>MKKSFILQQQEISFVKNTFTQYLIDQLDIIEVQGPILSQVGNGMQDNLSGIEKAVQVNVKCIPGAVFEVVHSLAKWKRHTLARFGFKQGEGLFVHMKALRPDEDSLDPTHSIYVDQWDWEKVIPEGQRNFAYLKQTVNQIYKAIRLTELAVEARFDIPSSLPKQITFIHSEELAQRYPNMSSKERENAICKEHGAIFLIGIGGKLSDGKAHDGRAPDYDDWTTESENGYKGLNGDILVWNEELGSAFELSSMGIRVDQQALRLQVSLTGDEDRLTMDWHQDLLAGRLPLSIGGGIGQSRLVMFLLHKKHIGEVQSSVWPTEMLTQFENIL</sequence>
<evidence type="ECO:0000255" key="1">
    <source>
        <dbReference type="HAMAP-Rule" id="MF_00555"/>
    </source>
</evidence>
<organism>
    <name type="scientific">Haemophilus ducreyi (strain 35000HP / ATCC 700724)</name>
    <dbReference type="NCBI Taxonomy" id="233412"/>
    <lineage>
        <taxon>Bacteria</taxon>
        <taxon>Pseudomonadati</taxon>
        <taxon>Pseudomonadota</taxon>
        <taxon>Gammaproteobacteria</taxon>
        <taxon>Pasteurellales</taxon>
        <taxon>Pasteurellaceae</taxon>
        <taxon>Haemophilus</taxon>
    </lineage>
</organism>
<name>ASNA_HAEDU</name>
<protein>
    <recommendedName>
        <fullName evidence="1">Aspartate--ammonia ligase</fullName>
        <ecNumber evidence="1">6.3.1.1</ecNumber>
    </recommendedName>
    <alternativeName>
        <fullName evidence="1">Asparagine synthetase A</fullName>
    </alternativeName>
</protein>
<gene>
    <name evidence="1" type="primary">asnA</name>
    <name type="ordered locus">HD_1913</name>
</gene>
<comment type="catalytic activity">
    <reaction evidence="1">
        <text>L-aspartate + NH4(+) + ATP = L-asparagine + AMP + diphosphate + H(+)</text>
        <dbReference type="Rhea" id="RHEA:11372"/>
        <dbReference type="ChEBI" id="CHEBI:15378"/>
        <dbReference type="ChEBI" id="CHEBI:28938"/>
        <dbReference type="ChEBI" id="CHEBI:29991"/>
        <dbReference type="ChEBI" id="CHEBI:30616"/>
        <dbReference type="ChEBI" id="CHEBI:33019"/>
        <dbReference type="ChEBI" id="CHEBI:58048"/>
        <dbReference type="ChEBI" id="CHEBI:456215"/>
        <dbReference type="EC" id="6.3.1.1"/>
    </reaction>
</comment>
<comment type="pathway">
    <text evidence="1">Amino-acid biosynthesis; L-asparagine biosynthesis; L-asparagine from L-aspartate (ammonia route): step 1/1.</text>
</comment>
<comment type="subcellular location">
    <subcellularLocation>
        <location evidence="1">Cytoplasm</location>
    </subcellularLocation>
</comment>
<comment type="similarity">
    <text evidence="1">Belongs to the class-II aminoacyl-tRNA synthetase family. AsnA subfamily.</text>
</comment>
<dbReference type="EC" id="6.3.1.1" evidence="1"/>
<dbReference type="EMBL" id="AE017143">
    <property type="protein sequence ID" value="AAP96637.1"/>
    <property type="molecule type" value="Genomic_DNA"/>
</dbReference>
<dbReference type="RefSeq" id="WP_010945665.1">
    <property type="nucleotide sequence ID" value="NC_002940.2"/>
</dbReference>
<dbReference type="SMR" id="Q7VKJ0"/>
<dbReference type="STRING" id="233412.HD_1913"/>
<dbReference type="KEGG" id="hdu:HD_1913"/>
<dbReference type="eggNOG" id="COG2502">
    <property type="taxonomic scope" value="Bacteria"/>
</dbReference>
<dbReference type="HOGENOM" id="CLU_071543_0_0_6"/>
<dbReference type="OrthoDB" id="3185462at2"/>
<dbReference type="UniPathway" id="UPA00134">
    <property type="reaction ID" value="UER00194"/>
</dbReference>
<dbReference type="Proteomes" id="UP000001022">
    <property type="component" value="Chromosome"/>
</dbReference>
<dbReference type="GO" id="GO:0005829">
    <property type="term" value="C:cytosol"/>
    <property type="evidence" value="ECO:0007669"/>
    <property type="project" value="TreeGrafter"/>
</dbReference>
<dbReference type="GO" id="GO:0004071">
    <property type="term" value="F:aspartate-ammonia ligase activity"/>
    <property type="evidence" value="ECO:0007669"/>
    <property type="project" value="UniProtKB-UniRule"/>
</dbReference>
<dbReference type="GO" id="GO:0005524">
    <property type="term" value="F:ATP binding"/>
    <property type="evidence" value="ECO:0007669"/>
    <property type="project" value="UniProtKB-UniRule"/>
</dbReference>
<dbReference type="GO" id="GO:0070981">
    <property type="term" value="P:L-asparagine biosynthetic process"/>
    <property type="evidence" value="ECO:0007669"/>
    <property type="project" value="UniProtKB-UniRule"/>
</dbReference>
<dbReference type="Gene3D" id="3.30.930.10">
    <property type="entry name" value="Bira Bifunctional Protein, Domain 2"/>
    <property type="match status" value="1"/>
</dbReference>
<dbReference type="HAMAP" id="MF_00555">
    <property type="entry name" value="AsnA"/>
    <property type="match status" value="1"/>
</dbReference>
<dbReference type="InterPro" id="IPR006195">
    <property type="entry name" value="aa-tRNA-synth_II"/>
</dbReference>
<dbReference type="InterPro" id="IPR045864">
    <property type="entry name" value="aa-tRNA-synth_II/BPL/LPL"/>
</dbReference>
<dbReference type="InterPro" id="IPR004618">
    <property type="entry name" value="AsnA"/>
</dbReference>
<dbReference type="NCBIfam" id="TIGR00669">
    <property type="entry name" value="asnA"/>
    <property type="match status" value="1"/>
</dbReference>
<dbReference type="PANTHER" id="PTHR30073">
    <property type="entry name" value="ASPARTATE--AMMONIA LIGASE"/>
    <property type="match status" value="1"/>
</dbReference>
<dbReference type="PANTHER" id="PTHR30073:SF5">
    <property type="entry name" value="ASPARTATE--AMMONIA LIGASE"/>
    <property type="match status" value="1"/>
</dbReference>
<dbReference type="Pfam" id="PF03590">
    <property type="entry name" value="AsnA"/>
    <property type="match status" value="1"/>
</dbReference>
<dbReference type="PIRSF" id="PIRSF001555">
    <property type="entry name" value="Asp_ammon_ligase"/>
    <property type="match status" value="1"/>
</dbReference>
<dbReference type="SUPFAM" id="SSF55681">
    <property type="entry name" value="Class II aaRS and biotin synthetases"/>
    <property type="match status" value="1"/>
</dbReference>
<dbReference type="PROSITE" id="PS50862">
    <property type="entry name" value="AA_TRNA_LIGASE_II"/>
    <property type="match status" value="1"/>
</dbReference>
<feature type="chain" id="PRO_0000195877" description="Aspartate--ammonia ligase">
    <location>
        <begin position="1"/>
        <end position="330"/>
    </location>
</feature>
<keyword id="KW-0028">Amino-acid biosynthesis</keyword>
<keyword id="KW-0061">Asparagine biosynthesis</keyword>
<keyword id="KW-0067">ATP-binding</keyword>
<keyword id="KW-0963">Cytoplasm</keyword>
<keyword id="KW-0436">Ligase</keyword>
<keyword id="KW-0547">Nucleotide-binding</keyword>
<keyword id="KW-1185">Reference proteome</keyword>
<reference key="1">
    <citation type="submission" date="2003-06" db="EMBL/GenBank/DDBJ databases">
        <title>The complete genome sequence of Haemophilus ducreyi.</title>
        <authorList>
            <person name="Munson R.S. Jr."/>
            <person name="Ray W.C."/>
            <person name="Mahairas G."/>
            <person name="Sabo P."/>
            <person name="Mungur R."/>
            <person name="Johnson L."/>
            <person name="Nguyen D."/>
            <person name="Wang J."/>
            <person name="Forst C."/>
            <person name="Hood L."/>
        </authorList>
    </citation>
    <scope>NUCLEOTIDE SEQUENCE [LARGE SCALE GENOMIC DNA]</scope>
    <source>
        <strain>35000HP / ATCC 700724</strain>
    </source>
</reference>
<proteinExistence type="inferred from homology"/>
<accession>Q7VKJ0</accession>